<comment type="function">
    <text evidence="1 7">Catalytic component of the COMPASS (Set1C) complex that specifically mono-, di- and trimethylates histone H3 to form H3K4me1/2/3 (PubMed:16469305). Binds RNAs which might negatively affect its histone methyltransferase activity (By similarity). COMPASS recognizes ubiquitinated H2B on one face of the nucleosome which stimulates the methylation of H3 on the opposing face (By similarity). May act to regulate chromatin-mediated events (PubMed:16469305).</text>
</comment>
<comment type="catalytic activity">
    <reaction evidence="1">
        <text>L-lysyl(4)-[histone H3] + 3 S-adenosyl-L-methionine = N(6),N(6),N(6)-trimethyl-L-lysyl(4)-[histone H3] + 3 S-adenosyl-L-homocysteine + 3 H(+)</text>
        <dbReference type="Rhea" id="RHEA:60260"/>
        <dbReference type="Rhea" id="RHEA-COMP:15537"/>
        <dbReference type="Rhea" id="RHEA-COMP:15547"/>
        <dbReference type="ChEBI" id="CHEBI:15378"/>
        <dbReference type="ChEBI" id="CHEBI:29969"/>
        <dbReference type="ChEBI" id="CHEBI:57856"/>
        <dbReference type="ChEBI" id="CHEBI:59789"/>
        <dbReference type="ChEBI" id="CHEBI:61961"/>
        <dbReference type="EC" id="2.1.1.354"/>
    </reaction>
</comment>
<comment type="catalytic activity">
    <reaction evidence="1">
        <text>N(6)-methyl-L-lysyl(4)-[histone H3] + S-adenosyl-L-methionine = N(6),N(6)-dimethyl-L-lysyl(4)-[histone H3] + S-adenosyl-L-homocysteine + H(+)</text>
        <dbReference type="Rhea" id="RHEA:60268"/>
        <dbReference type="Rhea" id="RHEA-COMP:15540"/>
        <dbReference type="Rhea" id="RHEA-COMP:15543"/>
        <dbReference type="ChEBI" id="CHEBI:15378"/>
        <dbReference type="ChEBI" id="CHEBI:57856"/>
        <dbReference type="ChEBI" id="CHEBI:59789"/>
        <dbReference type="ChEBI" id="CHEBI:61929"/>
        <dbReference type="ChEBI" id="CHEBI:61976"/>
    </reaction>
</comment>
<comment type="catalytic activity">
    <reaction evidence="1">
        <text>N(6),N(6)-dimethyl-L-lysyl(4)-[histone H3] + S-adenosyl-L-methionine = N(6),N(6),N(6)-trimethyl-L-lysyl(4)-[histone H3] + S-adenosyl-L-homocysteine + H(+)</text>
        <dbReference type="Rhea" id="RHEA:60272"/>
        <dbReference type="Rhea" id="RHEA-COMP:15537"/>
        <dbReference type="Rhea" id="RHEA-COMP:15540"/>
        <dbReference type="ChEBI" id="CHEBI:15378"/>
        <dbReference type="ChEBI" id="CHEBI:57856"/>
        <dbReference type="ChEBI" id="CHEBI:59789"/>
        <dbReference type="ChEBI" id="CHEBI:61961"/>
        <dbReference type="ChEBI" id="CHEBI:61976"/>
    </reaction>
</comment>
<comment type="subunit">
    <text evidence="1">Component of the Set1C/COMPASS complex.</text>
</comment>
<comment type="subcellular location">
    <subcellularLocation>
        <location evidence="7">Nucleus</location>
    </subcellularLocation>
    <subcellularLocation>
        <location evidence="8">Chromosome</location>
    </subcellularLocation>
</comment>
<comment type="disruption phenotype">
    <text evidence="7">Cells display unusually rapid development, characterized by precocious aggregation into multicellular aggregates, and completely lack mono-, di- and trimethylation of H3K4 ('Lys-5' of histone 3). Cells also induce premature differentiation.</text>
</comment>
<comment type="similarity">
    <text evidence="5">Belongs to the class V-like SAM-binding methyltransferase superfamily.</text>
</comment>
<gene>
    <name type="primary">set1</name>
    <name type="synonym">H3K4</name>
    <name type="ORF">DDB_G0289257</name>
</gene>
<keyword id="KW-0010">Activator</keyword>
<keyword id="KW-0156">Chromatin regulator</keyword>
<keyword id="KW-0158">Chromosome</keyword>
<keyword id="KW-0175">Coiled coil</keyword>
<keyword id="KW-0489">Methyltransferase</keyword>
<keyword id="KW-0539">Nucleus</keyword>
<keyword id="KW-1185">Reference proteome</keyword>
<keyword id="KW-0949">S-adenosyl-L-methionine</keyword>
<keyword id="KW-0808">Transferase</keyword>
<proteinExistence type="evidence at protein level"/>
<organism>
    <name type="scientific">Dictyostelium discoideum</name>
    <name type="common">Social amoeba</name>
    <dbReference type="NCBI Taxonomy" id="44689"/>
    <lineage>
        <taxon>Eukaryota</taxon>
        <taxon>Amoebozoa</taxon>
        <taxon>Evosea</taxon>
        <taxon>Eumycetozoa</taxon>
        <taxon>Dictyostelia</taxon>
        <taxon>Dictyosteliales</taxon>
        <taxon>Dictyosteliaceae</taxon>
        <taxon>Dictyostelium</taxon>
    </lineage>
</organism>
<dbReference type="EC" id="2.1.1.354" evidence="2"/>
<dbReference type="EMBL" id="AAFI02000132">
    <property type="protein sequence ID" value="EAL62816.1"/>
    <property type="molecule type" value="Genomic_DNA"/>
</dbReference>
<dbReference type="RefSeq" id="XP_636258.1">
    <property type="nucleotide sequence ID" value="XM_631166.1"/>
</dbReference>
<dbReference type="SMR" id="Q54HS3"/>
<dbReference type="FunCoup" id="Q54HS3">
    <property type="interactions" value="459"/>
</dbReference>
<dbReference type="STRING" id="44689.Q54HS3"/>
<dbReference type="PaxDb" id="44689-DDB0233375"/>
<dbReference type="EnsemblProtists" id="EAL62816">
    <property type="protein sequence ID" value="EAL62816"/>
    <property type="gene ID" value="DDB_G0289257"/>
</dbReference>
<dbReference type="GeneID" id="8627040"/>
<dbReference type="KEGG" id="ddi:DDB_G0289257"/>
<dbReference type="dictyBase" id="DDB_G0289257">
    <property type="gene designation" value="set1"/>
</dbReference>
<dbReference type="VEuPathDB" id="AmoebaDB:DDB_G0289257"/>
<dbReference type="eggNOG" id="KOG1080">
    <property type="taxonomic scope" value="Eukaryota"/>
</dbReference>
<dbReference type="eggNOG" id="KOG2217">
    <property type="taxonomic scope" value="Eukaryota"/>
</dbReference>
<dbReference type="HOGENOM" id="CLU_249415_0_0_1"/>
<dbReference type="InParanoid" id="Q54HS3"/>
<dbReference type="OMA" id="WYIDFRS"/>
<dbReference type="Reactome" id="R-DDI-3214841">
    <property type="pathway name" value="PKMTs methylate histone lysines"/>
</dbReference>
<dbReference type="Reactome" id="R-DDI-9772755">
    <property type="pathway name" value="Formation of WDR5-containing histone-modifying complexes"/>
</dbReference>
<dbReference type="PRO" id="PR:Q54HS3"/>
<dbReference type="Proteomes" id="UP000002195">
    <property type="component" value="Chromosome 5"/>
</dbReference>
<dbReference type="GO" id="GO:0005694">
    <property type="term" value="C:chromosome"/>
    <property type="evidence" value="ECO:0007669"/>
    <property type="project" value="UniProtKB-SubCell"/>
</dbReference>
<dbReference type="GO" id="GO:0005634">
    <property type="term" value="C:nucleus"/>
    <property type="evidence" value="ECO:0000305"/>
    <property type="project" value="dictyBase"/>
</dbReference>
<dbReference type="GO" id="GO:0048188">
    <property type="term" value="C:Set1C/COMPASS complex"/>
    <property type="evidence" value="ECO:0000314"/>
    <property type="project" value="dictyBase"/>
</dbReference>
<dbReference type="GO" id="GO:0042800">
    <property type="term" value="F:histone H3K4 methyltransferase activity"/>
    <property type="evidence" value="ECO:0000314"/>
    <property type="project" value="dictyBase"/>
</dbReference>
<dbReference type="GO" id="GO:0140999">
    <property type="term" value="F:histone H3K4 trimethyltransferase activity"/>
    <property type="evidence" value="ECO:0007669"/>
    <property type="project" value="UniProtKB-EC"/>
</dbReference>
<dbReference type="GO" id="GO:0003723">
    <property type="term" value="F:RNA binding"/>
    <property type="evidence" value="ECO:0000250"/>
    <property type="project" value="UniProtKB"/>
</dbReference>
<dbReference type="GO" id="GO:0040029">
    <property type="term" value="P:epigenetic regulation of gene expression"/>
    <property type="evidence" value="ECO:0000314"/>
    <property type="project" value="dictyBase"/>
</dbReference>
<dbReference type="GO" id="GO:0032259">
    <property type="term" value="P:methylation"/>
    <property type="evidence" value="ECO:0007669"/>
    <property type="project" value="UniProtKB-KW"/>
</dbReference>
<dbReference type="GO" id="GO:0045815">
    <property type="term" value="P:transcription initiation-coupled chromatin remodeling"/>
    <property type="evidence" value="ECO:0000314"/>
    <property type="project" value="dictyBase"/>
</dbReference>
<dbReference type="CDD" id="cd20072">
    <property type="entry name" value="SET_SET1"/>
    <property type="match status" value="1"/>
</dbReference>
<dbReference type="Gene3D" id="2.170.270.10">
    <property type="entry name" value="SET domain"/>
    <property type="match status" value="1"/>
</dbReference>
<dbReference type="InterPro" id="IPR003616">
    <property type="entry name" value="Post-SET_dom"/>
</dbReference>
<dbReference type="InterPro" id="IPR035979">
    <property type="entry name" value="RBD_domain_sf"/>
</dbReference>
<dbReference type="InterPro" id="IPR044570">
    <property type="entry name" value="Set1-like"/>
</dbReference>
<dbReference type="InterPro" id="IPR001214">
    <property type="entry name" value="SET_dom"/>
</dbReference>
<dbReference type="InterPro" id="IPR046341">
    <property type="entry name" value="SET_dom_sf"/>
</dbReference>
<dbReference type="PANTHER" id="PTHR45814">
    <property type="entry name" value="HISTONE-LYSINE N-METHYLTRANSFERASE SETD1"/>
    <property type="match status" value="1"/>
</dbReference>
<dbReference type="PANTHER" id="PTHR45814:SF2">
    <property type="entry name" value="HISTONE-LYSINE N-METHYLTRANSFERASE SETD1"/>
    <property type="match status" value="1"/>
</dbReference>
<dbReference type="Pfam" id="PF00856">
    <property type="entry name" value="SET"/>
    <property type="match status" value="1"/>
</dbReference>
<dbReference type="SMART" id="SM00508">
    <property type="entry name" value="PostSET"/>
    <property type="match status" value="1"/>
</dbReference>
<dbReference type="SMART" id="SM00317">
    <property type="entry name" value="SET"/>
    <property type="match status" value="1"/>
</dbReference>
<dbReference type="SUPFAM" id="SSF54928">
    <property type="entry name" value="RNA-binding domain, RBD"/>
    <property type="match status" value="1"/>
</dbReference>
<dbReference type="SUPFAM" id="SSF82199">
    <property type="entry name" value="SET domain"/>
    <property type="match status" value="1"/>
</dbReference>
<dbReference type="PROSITE" id="PS50868">
    <property type="entry name" value="POST_SET"/>
    <property type="match status" value="1"/>
</dbReference>
<dbReference type="PROSITE" id="PS50280">
    <property type="entry name" value="SET"/>
    <property type="match status" value="1"/>
</dbReference>
<reference key="1">
    <citation type="journal article" date="2005" name="Nature">
        <title>The genome of the social amoeba Dictyostelium discoideum.</title>
        <authorList>
            <person name="Eichinger L."/>
            <person name="Pachebat J.A."/>
            <person name="Gloeckner G."/>
            <person name="Rajandream M.A."/>
            <person name="Sucgang R."/>
            <person name="Berriman M."/>
            <person name="Song J."/>
            <person name="Olsen R."/>
            <person name="Szafranski K."/>
            <person name="Xu Q."/>
            <person name="Tunggal B."/>
            <person name="Kummerfeld S."/>
            <person name="Madera M."/>
            <person name="Konfortov B.A."/>
            <person name="Rivero F."/>
            <person name="Bankier A.T."/>
            <person name="Lehmann R."/>
            <person name="Hamlin N."/>
            <person name="Davies R."/>
            <person name="Gaudet P."/>
            <person name="Fey P."/>
            <person name="Pilcher K."/>
            <person name="Chen G."/>
            <person name="Saunders D."/>
            <person name="Sodergren E.J."/>
            <person name="Davis P."/>
            <person name="Kerhornou A."/>
            <person name="Nie X."/>
            <person name="Hall N."/>
            <person name="Anjard C."/>
            <person name="Hemphill L."/>
            <person name="Bason N."/>
            <person name="Farbrother P."/>
            <person name="Desany B."/>
            <person name="Just E."/>
            <person name="Morio T."/>
            <person name="Rost R."/>
            <person name="Churcher C.M."/>
            <person name="Cooper J."/>
            <person name="Haydock S."/>
            <person name="van Driessche N."/>
            <person name="Cronin A."/>
            <person name="Goodhead I."/>
            <person name="Muzny D.M."/>
            <person name="Mourier T."/>
            <person name="Pain A."/>
            <person name="Lu M."/>
            <person name="Harper D."/>
            <person name="Lindsay R."/>
            <person name="Hauser H."/>
            <person name="James K.D."/>
            <person name="Quiles M."/>
            <person name="Madan Babu M."/>
            <person name="Saito T."/>
            <person name="Buchrieser C."/>
            <person name="Wardroper A."/>
            <person name="Felder M."/>
            <person name="Thangavelu M."/>
            <person name="Johnson D."/>
            <person name="Knights A."/>
            <person name="Loulseged H."/>
            <person name="Mungall K.L."/>
            <person name="Oliver K."/>
            <person name="Price C."/>
            <person name="Quail M.A."/>
            <person name="Urushihara H."/>
            <person name="Hernandez J."/>
            <person name="Rabbinowitsch E."/>
            <person name="Steffen D."/>
            <person name="Sanders M."/>
            <person name="Ma J."/>
            <person name="Kohara Y."/>
            <person name="Sharp S."/>
            <person name="Simmonds M.N."/>
            <person name="Spiegler S."/>
            <person name="Tivey A."/>
            <person name="Sugano S."/>
            <person name="White B."/>
            <person name="Walker D."/>
            <person name="Woodward J.R."/>
            <person name="Winckler T."/>
            <person name="Tanaka Y."/>
            <person name="Shaulsky G."/>
            <person name="Schleicher M."/>
            <person name="Weinstock G.M."/>
            <person name="Rosenthal A."/>
            <person name="Cox E.C."/>
            <person name="Chisholm R.L."/>
            <person name="Gibbs R.A."/>
            <person name="Loomis W.F."/>
            <person name="Platzer M."/>
            <person name="Kay R.R."/>
            <person name="Williams J.G."/>
            <person name="Dear P.H."/>
            <person name="Noegel A.A."/>
            <person name="Barrell B.G."/>
            <person name="Kuspa A."/>
        </authorList>
    </citation>
    <scope>NUCLEOTIDE SEQUENCE [LARGE SCALE GENOMIC DNA]</scope>
    <source>
        <strain>AX4</strain>
    </source>
</reference>
<reference key="2">
    <citation type="journal article" date="2006" name="Dev. Biol.">
        <title>Developmental timing in Dictyostelium is regulated by the Set1 histone methyltransferase.</title>
        <authorList>
            <person name="Chubb J.R."/>
            <person name="Bloomfield G."/>
            <person name="Xu Q."/>
            <person name="Kaller M."/>
            <person name="Ivens A."/>
            <person name="Skelton J."/>
            <person name="Turner B.M."/>
            <person name="Nellen W."/>
            <person name="Shaulsky G."/>
            <person name="Kay R.R."/>
            <person name="Bickmore W.A."/>
            <person name="Singer R.H."/>
        </authorList>
    </citation>
    <scope>DISRUPTION PHENOTYPE</scope>
    <scope>FUNCTION</scope>
    <scope>MUTAGENESIS OF ASN-1425 AND CYS-1474</scope>
    <scope>SUBCELLULAR LOCATION</scope>
</reference>
<evidence type="ECO:0000250" key="1">
    <source>
        <dbReference type="UniProtKB" id="P38827"/>
    </source>
</evidence>
<evidence type="ECO:0000250" key="2">
    <source>
        <dbReference type="UniProtKB" id="Q9UPS6"/>
    </source>
</evidence>
<evidence type="ECO:0000255" key="3"/>
<evidence type="ECO:0000255" key="4">
    <source>
        <dbReference type="PROSITE-ProRule" id="PRU00155"/>
    </source>
</evidence>
<evidence type="ECO:0000255" key="5">
    <source>
        <dbReference type="PROSITE-ProRule" id="PRU00190"/>
    </source>
</evidence>
<evidence type="ECO:0000256" key="6">
    <source>
        <dbReference type="SAM" id="MobiDB-lite"/>
    </source>
</evidence>
<evidence type="ECO:0000269" key="7">
    <source>
    </source>
</evidence>
<evidence type="ECO:0000305" key="8">
    <source>
    </source>
</evidence>
<feature type="chain" id="PRO_0000379483" description="Histone-lysine N-methyltransferase set1">
    <location>
        <begin position="1"/>
        <end position="1486"/>
    </location>
</feature>
<feature type="domain" description="SET" evidence="5">
    <location>
        <begin position="1347"/>
        <end position="1464"/>
    </location>
</feature>
<feature type="domain" description="Post-SET" evidence="4">
    <location>
        <begin position="1470"/>
        <end position="1486"/>
    </location>
</feature>
<feature type="region of interest" description="Disordered" evidence="6">
    <location>
        <begin position="1"/>
        <end position="64"/>
    </location>
</feature>
<feature type="region of interest" description="Disordered" evidence="6">
    <location>
        <begin position="83"/>
        <end position="148"/>
    </location>
</feature>
<feature type="region of interest" description="Disordered" evidence="6">
    <location>
        <begin position="201"/>
        <end position="231"/>
    </location>
</feature>
<feature type="region of interest" description="Disordered" evidence="6">
    <location>
        <begin position="309"/>
        <end position="360"/>
    </location>
</feature>
<feature type="region of interest" description="Disordered" evidence="6">
    <location>
        <begin position="409"/>
        <end position="429"/>
    </location>
</feature>
<feature type="region of interest" description="Disordered" evidence="6">
    <location>
        <begin position="532"/>
        <end position="665"/>
    </location>
</feature>
<feature type="region of interest" description="Disordered" evidence="6">
    <location>
        <begin position="812"/>
        <end position="1103"/>
    </location>
</feature>
<feature type="region of interest" description="Disordered" evidence="6">
    <location>
        <begin position="1130"/>
        <end position="1255"/>
    </location>
</feature>
<feature type="region of interest" description="Disordered" evidence="6">
    <location>
        <begin position="1278"/>
        <end position="1327"/>
    </location>
</feature>
<feature type="coiled-coil region" evidence="3">
    <location>
        <begin position="359"/>
        <end position="400"/>
    </location>
</feature>
<feature type="coiled-coil region" evidence="3">
    <location>
        <begin position="717"/>
        <end position="744"/>
    </location>
</feature>
<feature type="coiled-coil region" evidence="3">
    <location>
        <begin position="1177"/>
        <end position="1255"/>
    </location>
</feature>
<feature type="compositionally biased region" description="Low complexity" evidence="6">
    <location>
        <begin position="9"/>
        <end position="52"/>
    </location>
</feature>
<feature type="compositionally biased region" description="Basic and acidic residues" evidence="6">
    <location>
        <begin position="53"/>
        <end position="64"/>
    </location>
</feature>
<feature type="compositionally biased region" description="Low complexity" evidence="6">
    <location>
        <begin position="115"/>
        <end position="148"/>
    </location>
</feature>
<feature type="compositionally biased region" description="Polar residues" evidence="6">
    <location>
        <begin position="201"/>
        <end position="210"/>
    </location>
</feature>
<feature type="compositionally biased region" description="Low complexity" evidence="6">
    <location>
        <begin position="211"/>
        <end position="231"/>
    </location>
</feature>
<feature type="compositionally biased region" description="Pro residues" evidence="6">
    <location>
        <begin position="320"/>
        <end position="343"/>
    </location>
</feature>
<feature type="compositionally biased region" description="Polar residues" evidence="6">
    <location>
        <begin position="347"/>
        <end position="359"/>
    </location>
</feature>
<feature type="compositionally biased region" description="Basic and acidic residues" evidence="6">
    <location>
        <begin position="532"/>
        <end position="542"/>
    </location>
</feature>
<feature type="compositionally biased region" description="Low complexity" evidence="6">
    <location>
        <begin position="552"/>
        <end position="584"/>
    </location>
</feature>
<feature type="compositionally biased region" description="Low complexity" evidence="6">
    <location>
        <begin position="617"/>
        <end position="663"/>
    </location>
</feature>
<feature type="compositionally biased region" description="Low complexity" evidence="6">
    <location>
        <begin position="812"/>
        <end position="829"/>
    </location>
</feature>
<feature type="compositionally biased region" description="Low complexity" evidence="6">
    <location>
        <begin position="843"/>
        <end position="860"/>
    </location>
</feature>
<feature type="compositionally biased region" description="Acidic residues" evidence="6">
    <location>
        <begin position="906"/>
        <end position="931"/>
    </location>
</feature>
<feature type="compositionally biased region" description="Basic residues" evidence="6">
    <location>
        <begin position="945"/>
        <end position="954"/>
    </location>
</feature>
<feature type="compositionally biased region" description="Basic residues" evidence="6">
    <location>
        <begin position="965"/>
        <end position="979"/>
    </location>
</feature>
<feature type="compositionally biased region" description="Acidic residues" evidence="6">
    <location>
        <begin position="997"/>
        <end position="1006"/>
    </location>
</feature>
<feature type="compositionally biased region" description="Acidic residues" evidence="6">
    <location>
        <begin position="1022"/>
        <end position="1043"/>
    </location>
</feature>
<feature type="compositionally biased region" description="Basic residues" evidence="6">
    <location>
        <begin position="1048"/>
        <end position="1064"/>
    </location>
</feature>
<feature type="compositionally biased region" description="Low complexity" evidence="6">
    <location>
        <begin position="1065"/>
        <end position="1077"/>
    </location>
</feature>
<feature type="compositionally biased region" description="Polar residues" evidence="6">
    <location>
        <begin position="1139"/>
        <end position="1148"/>
    </location>
</feature>
<feature type="compositionally biased region" description="Basic and acidic residues" evidence="6">
    <location>
        <begin position="1179"/>
        <end position="1199"/>
    </location>
</feature>
<feature type="compositionally biased region" description="Low complexity" evidence="6">
    <location>
        <begin position="1213"/>
        <end position="1223"/>
    </location>
</feature>
<feature type="compositionally biased region" description="Basic and acidic residues" evidence="6">
    <location>
        <begin position="1224"/>
        <end position="1240"/>
    </location>
</feature>
<feature type="compositionally biased region" description="Low complexity" evidence="6">
    <location>
        <begin position="1243"/>
        <end position="1255"/>
    </location>
</feature>
<feature type="compositionally biased region" description="Low complexity" evidence="6">
    <location>
        <begin position="1292"/>
        <end position="1316"/>
    </location>
</feature>
<feature type="binding site" evidence="5">
    <location>
        <position position="1463"/>
    </location>
    <ligand>
        <name>S-adenosyl-L-methionine</name>
        <dbReference type="ChEBI" id="CHEBI:59789"/>
    </ligand>
</feature>
<feature type="mutagenesis site" description="Loss of catalytic activity; when associated with Ala-1474." evidence="7">
    <original>N</original>
    <variation>Q</variation>
    <location>
        <position position="1425"/>
    </location>
</feature>
<feature type="mutagenesis site" description="Loss of catalytic activity; when associated with Gln-1425." evidence="7">
    <original>C</original>
    <variation>A</variation>
    <location>
        <position position="1474"/>
    </location>
</feature>
<name>SET1_DICDI</name>
<sequence length="1486" mass="170527">MENETIVDNSLNNKSNVNNSNNDINNSKSNNNNTNTNYNNNHNNTTTTTTINKTEEKQNDSPKDSEFEFLDELKGVDDQHHVFSSEDESYTNGNKKRKQTDTPLSPNQDLKKRSITSPTTSPTTSTSTSTSTSTSTSTSTIINNNNNNLKDKTKEEIEFIKHIRSQLVKPKFLKDKPNFPLRSSGGNWIFVGKLPSLQSTTTDNTTLMSPNNATTTNGSSSNISTTTTTTTTTTPTTKILYRVNGFLSDNETIDSIEINFGDPRDRYEIERLHSSRINNPFELPCVSFKNPLFIKSNIAKDIGISNEYGGMNDSFEFSNQPPPPSPPPPPPPTLPPPPPPTLPPQHSLEQQSTKQQIFTQQQQQQQQQQQQQQQQQQQQQQQQQQQQQQQQQIPKINQQHYSTQPSVLIDDIYDPSNPTEPISPHQDHYPNFIFSKLQRYEHLPTRNPISQYDYRDRPRDWERDRDRDWERDRDWERDRDRERDRDRDRDWERDRDWERDRDWERDRDRDRDWERDRDRDWERDRDRDWERDRERDRDRYDRQTNFSPAPQSTTTSASTSSTTSSTDKNSNNTTSTSVSATTSTTKRKSKFSEPIEPSPFAIQIPRDNIKINGNLINNSSSSSSSGNNNNNNNNNNNNNNNNNNNNNNNNNNNNNSNNNNNNSDVKDIKDKLLKQFKIYDPVNVYMDESYWYIDFRSSESRERAIQVLNGSFIDTWKLNVDNKKTNTINEELQKQKQLENDSNNNKPNNFNLLENERSLKEICKLLVATELLSTSSKDISKNFIEAEILKTIKLLDSQRIDPLTQNSTIINNTTNTTTSNINNTSNNTTVTPIVTPKSIISAPTSRDSPRGGRSSSTTTKKPSKLDLNGSGVPPTLKKLDTIKQQQQPQPPLSPLKRPPKSHFYSDSEDDGNNNNDDDDDDDDDEDDDFDQELSPLHSSRDSKKNIKSIIKKKPIYSDDDDDHYHHHNHHHNHHHHHHHDRSEVELYNESDLQVDVLDSDNENQDESDYHKSSDNFGHVELSDDDNEFDSLDTDQDLYDTEENDNGKKSNKRPRKSKFNGKSKKPTTTTSTTTTATKSKGRSKKTTITTPTHNIPVLDEIQSNLDDEDASYVSMVMAADKDIKLLFSTKSEEGFEDSSQEILSTPTRTKPSRNRKERNLPFLDEEDDESFKQLPQPQQKQEKQEKHEHKLKNKELKQKNNEVIINKTEEHFSENLNGDNNNNNDKSENENENENENKNENENDNNNLNTSIDNINGVERRSITGCARSEGYTRSDIQKLFKRKQVAPTGKRGAASSASSGSNSSSSSTAESFETGGNLSKSARSSRFDNRGFGSDPITLASLKSRRKRIKFERSDIHDWGLFAMETISAKDMVIEYIGEVIRQKVADEREKRYVKKGIGSSYLFRVDDDTIIDATFKGNLARFINHCCDPNCIAKVLTIGNQKKIIIYAKRDINIGEEITYDYKFPIEDVKIPCLCKSPKCRQTLN</sequence>
<accession>Q54HS3</accession>
<protein>
    <recommendedName>
        <fullName>Histone-lysine N-methyltransferase set1</fullName>
        <ecNumber evidence="2">2.1.1.354</ecNumber>
    </recommendedName>
    <alternativeName>
        <fullName>Histone H3 lysine 4 methyltransferase</fullName>
    </alternativeName>
    <alternativeName>
        <fullName>SET domain-containing protein 1</fullName>
    </alternativeName>
</protein>